<name>RR14_EUCGG</name>
<dbReference type="EMBL" id="AY780259">
    <property type="protein sequence ID" value="AAX21027.1"/>
    <property type="molecule type" value="Genomic_DNA"/>
</dbReference>
<dbReference type="RefSeq" id="YP_636297.1">
    <property type="nucleotide sequence ID" value="NC_008115.1"/>
</dbReference>
<dbReference type="SMR" id="Q49L00"/>
<dbReference type="GeneID" id="4108386"/>
<dbReference type="GO" id="GO:0009507">
    <property type="term" value="C:chloroplast"/>
    <property type="evidence" value="ECO:0007669"/>
    <property type="project" value="UniProtKB-SubCell"/>
</dbReference>
<dbReference type="GO" id="GO:0015935">
    <property type="term" value="C:small ribosomal subunit"/>
    <property type="evidence" value="ECO:0007669"/>
    <property type="project" value="TreeGrafter"/>
</dbReference>
<dbReference type="GO" id="GO:0019843">
    <property type="term" value="F:rRNA binding"/>
    <property type="evidence" value="ECO:0007669"/>
    <property type="project" value="UniProtKB-UniRule"/>
</dbReference>
<dbReference type="GO" id="GO:0003735">
    <property type="term" value="F:structural constituent of ribosome"/>
    <property type="evidence" value="ECO:0007669"/>
    <property type="project" value="InterPro"/>
</dbReference>
<dbReference type="GO" id="GO:0006412">
    <property type="term" value="P:translation"/>
    <property type="evidence" value="ECO:0007669"/>
    <property type="project" value="UniProtKB-UniRule"/>
</dbReference>
<dbReference type="FunFam" id="1.10.287.1480:FF:000001">
    <property type="entry name" value="30S ribosomal protein S14"/>
    <property type="match status" value="1"/>
</dbReference>
<dbReference type="Gene3D" id="1.10.287.1480">
    <property type="match status" value="1"/>
</dbReference>
<dbReference type="HAMAP" id="MF_00537">
    <property type="entry name" value="Ribosomal_uS14_1"/>
    <property type="match status" value="1"/>
</dbReference>
<dbReference type="InterPro" id="IPR001209">
    <property type="entry name" value="Ribosomal_uS14"/>
</dbReference>
<dbReference type="InterPro" id="IPR023036">
    <property type="entry name" value="Ribosomal_uS14_bac/plastid"/>
</dbReference>
<dbReference type="InterPro" id="IPR018271">
    <property type="entry name" value="Ribosomal_uS14_CS"/>
</dbReference>
<dbReference type="NCBIfam" id="NF006477">
    <property type="entry name" value="PRK08881.1"/>
    <property type="match status" value="1"/>
</dbReference>
<dbReference type="PANTHER" id="PTHR19836">
    <property type="entry name" value="30S RIBOSOMAL PROTEIN S14"/>
    <property type="match status" value="1"/>
</dbReference>
<dbReference type="PANTHER" id="PTHR19836:SF19">
    <property type="entry name" value="SMALL RIBOSOMAL SUBUNIT PROTEIN US14M"/>
    <property type="match status" value="1"/>
</dbReference>
<dbReference type="Pfam" id="PF00253">
    <property type="entry name" value="Ribosomal_S14"/>
    <property type="match status" value="1"/>
</dbReference>
<dbReference type="SUPFAM" id="SSF57716">
    <property type="entry name" value="Glucocorticoid receptor-like (DNA-binding domain)"/>
    <property type="match status" value="1"/>
</dbReference>
<dbReference type="PROSITE" id="PS00527">
    <property type="entry name" value="RIBOSOMAL_S14"/>
    <property type="match status" value="1"/>
</dbReference>
<comment type="function">
    <text evidence="1">Binds 16S rRNA, required for the assembly of 30S particles.</text>
</comment>
<comment type="subunit">
    <text evidence="1">Part of the 30S ribosomal subunit.</text>
</comment>
<comment type="subcellular location">
    <subcellularLocation>
        <location>Plastid</location>
        <location>Chloroplast</location>
    </subcellularLocation>
</comment>
<comment type="similarity">
    <text evidence="1">Belongs to the universal ribosomal protein uS14 family.</text>
</comment>
<proteinExistence type="inferred from homology"/>
<protein>
    <recommendedName>
        <fullName evidence="1">Small ribosomal subunit protein uS14c</fullName>
    </recommendedName>
    <alternativeName>
        <fullName evidence="2">30S ribosomal protein S14, chloroplastic</fullName>
    </alternativeName>
</protein>
<keyword id="KW-0150">Chloroplast</keyword>
<keyword id="KW-0934">Plastid</keyword>
<keyword id="KW-0687">Ribonucleoprotein</keyword>
<keyword id="KW-0689">Ribosomal protein</keyword>
<keyword id="KW-0694">RNA-binding</keyword>
<keyword id="KW-0699">rRNA-binding</keyword>
<gene>
    <name evidence="1" type="primary">rps14</name>
</gene>
<geneLocation type="chloroplast"/>
<feature type="chain" id="PRO_0000276676" description="Small ribosomal subunit protein uS14c">
    <location>
        <begin position="1"/>
        <end position="100"/>
    </location>
</feature>
<sequence length="100" mass="11721">MARKSLIQREKKRQKLEQKYHLIRRSSKKEISKVPSLSEKWKIHGKLQSSPRNSAPTRLHRRCFSTGRPRANYRDFGLSGHILREMVHACLLPGATRSSW</sequence>
<accession>Q49L00</accession>
<evidence type="ECO:0000255" key="1">
    <source>
        <dbReference type="HAMAP-Rule" id="MF_00537"/>
    </source>
</evidence>
<evidence type="ECO:0000305" key="2"/>
<organism>
    <name type="scientific">Eucalyptus globulus subsp. globulus</name>
    <name type="common">Tasmanian blue gum</name>
    <dbReference type="NCBI Taxonomy" id="71271"/>
    <lineage>
        <taxon>Eukaryota</taxon>
        <taxon>Viridiplantae</taxon>
        <taxon>Streptophyta</taxon>
        <taxon>Embryophyta</taxon>
        <taxon>Tracheophyta</taxon>
        <taxon>Spermatophyta</taxon>
        <taxon>Magnoliopsida</taxon>
        <taxon>eudicotyledons</taxon>
        <taxon>Gunneridae</taxon>
        <taxon>Pentapetalae</taxon>
        <taxon>rosids</taxon>
        <taxon>malvids</taxon>
        <taxon>Myrtales</taxon>
        <taxon>Myrtaceae</taxon>
        <taxon>Myrtoideae</taxon>
        <taxon>Eucalypteae</taxon>
        <taxon>Eucalyptus</taxon>
    </lineage>
</organism>
<reference key="1">
    <citation type="journal article" date="2005" name="DNA Res.">
        <title>Complete nucleotide sequence of the chloroplast genome from the Tasmanian blue gum, Eucalyptus globulus (Myrtaceae).</title>
        <authorList>
            <person name="Steane D.A."/>
        </authorList>
    </citation>
    <scope>NUCLEOTIDE SEQUENCE [LARGE SCALE GENOMIC DNA]</scope>
</reference>